<gene>
    <name evidence="1" type="primary">pcn</name>
    <name type="ordered locus">Mpal_0792</name>
</gene>
<organism>
    <name type="scientific">Methanosphaerula palustris (strain ATCC BAA-1556 / DSM 19958 / E1-9c)</name>
    <dbReference type="NCBI Taxonomy" id="521011"/>
    <lineage>
        <taxon>Archaea</taxon>
        <taxon>Methanobacteriati</taxon>
        <taxon>Methanobacteriota</taxon>
        <taxon>Stenosarchaea group</taxon>
        <taxon>Methanomicrobia</taxon>
        <taxon>Methanomicrobiales</taxon>
        <taxon>Methanoregulaceae</taxon>
        <taxon>Methanosphaerula</taxon>
    </lineage>
</organism>
<dbReference type="EMBL" id="CP001338">
    <property type="protein sequence ID" value="ACL16154.1"/>
    <property type="molecule type" value="Genomic_DNA"/>
</dbReference>
<dbReference type="RefSeq" id="WP_012617473.1">
    <property type="nucleotide sequence ID" value="NC_011832.1"/>
</dbReference>
<dbReference type="SMR" id="B8GG80"/>
<dbReference type="STRING" id="521011.Mpal_0792"/>
<dbReference type="GeneID" id="7270533"/>
<dbReference type="KEGG" id="mpl:Mpal_0792"/>
<dbReference type="eggNOG" id="arCOG00488">
    <property type="taxonomic scope" value="Archaea"/>
</dbReference>
<dbReference type="HOGENOM" id="CLU_043978_1_1_2"/>
<dbReference type="OrthoDB" id="14749at2157"/>
<dbReference type="Proteomes" id="UP000002457">
    <property type="component" value="Chromosome"/>
</dbReference>
<dbReference type="GO" id="GO:0003677">
    <property type="term" value="F:DNA binding"/>
    <property type="evidence" value="ECO:0007669"/>
    <property type="project" value="UniProtKB-UniRule"/>
</dbReference>
<dbReference type="GO" id="GO:0030337">
    <property type="term" value="F:DNA polymerase processivity factor activity"/>
    <property type="evidence" value="ECO:0007669"/>
    <property type="project" value="UniProtKB-UniRule"/>
</dbReference>
<dbReference type="GO" id="GO:0006272">
    <property type="term" value="P:leading strand elongation"/>
    <property type="evidence" value="ECO:0007669"/>
    <property type="project" value="TreeGrafter"/>
</dbReference>
<dbReference type="GO" id="GO:0006275">
    <property type="term" value="P:regulation of DNA replication"/>
    <property type="evidence" value="ECO:0007669"/>
    <property type="project" value="UniProtKB-UniRule"/>
</dbReference>
<dbReference type="CDD" id="cd00577">
    <property type="entry name" value="PCNA"/>
    <property type="match status" value="1"/>
</dbReference>
<dbReference type="Gene3D" id="3.70.10.10">
    <property type="match status" value="1"/>
</dbReference>
<dbReference type="HAMAP" id="MF_00317">
    <property type="entry name" value="DNApol_clamp_arch"/>
    <property type="match status" value="1"/>
</dbReference>
<dbReference type="InterPro" id="IPR046938">
    <property type="entry name" value="DNA_clamp_sf"/>
</dbReference>
<dbReference type="InterPro" id="IPR000730">
    <property type="entry name" value="Pr_cel_nuc_antig"/>
</dbReference>
<dbReference type="InterPro" id="IPR022649">
    <property type="entry name" value="Pr_cel_nuc_antig_C"/>
</dbReference>
<dbReference type="InterPro" id="IPR022648">
    <property type="entry name" value="Pr_cel_nuc_antig_N"/>
</dbReference>
<dbReference type="NCBIfam" id="NF002222">
    <property type="entry name" value="PRK01115.1-5"/>
    <property type="match status" value="1"/>
</dbReference>
<dbReference type="PANTHER" id="PTHR11352">
    <property type="entry name" value="PROLIFERATING CELL NUCLEAR ANTIGEN"/>
    <property type="match status" value="1"/>
</dbReference>
<dbReference type="PANTHER" id="PTHR11352:SF0">
    <property type="entry name" value="PROLIFERATING CELL NUCLEAR ANTIGEN"/>
    <property type="match status" value="1"/>
</dbReference>
<dbReference type="Pfam" id="PF02747">
    <property type="entry name" value="PCNA_C"/>
    <property type="match status" value="1"/>
</dbReference>
<dbReference type="Pfam" id="PF00705">
    <property type="entry name" value="PCNA_N"/>
    <property type="match status" value="1"/>
</dbReference>
<dbReference type="PRINTS" id="PR00339">
    <property type="entry name" value="PCNACYCLIN"/>
</dbReference>
<dbReference type="SUPFAM" id="SSF55979">
    <property type="entry name" value="DNA clamp"/>
    <property type="match status" value="1"/>
</dbReference>
<comment type="function">
    <text evidence="1">Sliding clamp subunit that acts as a moving platform for DNA processing. Responsible for tethering the catalytic subunit of DNA polymerase and other proteins to DNA during high-speed replication.</text>
</comment>
<comment type="subunit">
    <text evidence="1">Homotrimer. The subunits circularize to form a toroid; DNA passes through its center. Replication factor C (RFC) is required to load the toroid on the DNA.</text>
</comment>
<comment type="similarity">
    <text evidence="1">Belongs to the PCNA family.</text>
</comment>
<evidence type="ECO:0000255" key="1">
    <source>
        <dbReference type="HAMAP-Rule" id="MF_00317"/>
    </source>
</evidence>
<protein>
    <recommendedName>
        <fullName evidence="1">DNA polymerase sliding clamp</fullName>
    </recommendedName>
    <alternativeName>
        <fullName evidence="1">Proliferating cell nuclear antigen homolog</fullName>
        <shortName evidence="1">PCNA</shortName>
    </alternativeName>
</protein>
<keyword id="KW-0235">DNA replication</keyword>
<keyword id="KW-0238">DNA-binding</keyword>
<keyword id="KW-1185">Reference proteome</keyword>
<feature type="chain" id="PRO_1000132971" description="DNA polymerase sliding clamp">
    <location>
        <begin position="1"/>
        <end position="247"/>
    </location>
</feature>
<sequence>MLDATIDADVFRESVDAIAALVTECRLHATEQGLRTRTVDTANVAMISLELDKDVFESYQATSSEMGIDIVKIKNVLSMMGKGDPVHLALAEESRKLEVSFQSYQYSITLLDTNTIRKDPNAPTIELPGKVVISGAALSAAIKAASVVSDKIALGIDPEKGIFYMEAEGDTDHIRLELGDDKLISLVPVQARSLFSLDYLKDMGKTMSKAEKVEISLGIDHPVEFTFDIADGKGHVMYLLAPRIEAD</sequence>
<accession>B8GG80</accession>
<reference key="1">
    <citation type="journal article" date="2015" name="Genome Announc.">
        <title>Complete Genome Sequence of Methanosphaerula palustris E1-9CT, a Hydrogenotrophic Methanogen Isolated from a Minerotrophic Fen Peatland.</title>
        <authorList>
            <person name="Cadillo-Quiroz H."/>
            <person name="Browne P."/>
            <person name="Kyrpides N."/>
            <person name="Woyke T."/>
            <person name="Goodwin L."/>
            <person name="Detter C."/>
            <person name="Yavitt J.B."/>
            <person name="Zinder S.H."/>
        </authorList>
    </citation>
    <scope>NUCLEOTIDE SEQUENCE [LARGE SCALE GENOMIC DNA]</scope>
    <source>
        <strain>ATCC BAA-1556 / DSM 19958 / E1-9c</strain>
    </source>
</reference>
<proteinExistence type="inferred from homology"/>
<name>PCNA_METPE</name>